<feature type="chain" id="PRO_0000311437" description="Iron-sulfur cluster insertion protein ErpA">
    <location>
        <begin position="1"/>
        <end position="111"/>
    </location>
</feature>
<feature type="binding site" evidence="1">
    <location>
        <position position="39"/>
    </location>
    <ligand>
        <name>iron-sulfur cluster</name>
        <dbReference type="ChEBI" id="CHEBI:30408"/>
    </ligand>
</feature>
<feature type="binding site" evidence="1">
    <location>
        <position position="103"/>
    </location>
    <ligand>
        <name>iron-sulfur cluster</name>
        <dbReference type="ChEBI" id="CHEBI:30408"/>
    </ligand>
</feature>
<feature type="binding site" evidence="1">
    <location>
        <position position="105"/>
    </location>
    <ligand>
        <name>iron-sulfur cluster</name>
        <dbReference type="ChEBI" id="CHEBI:30408"/>
    </ligand>
</feature>
<reference key="1">
    <citation type="journal article" date="2007" name="Genes Dev.">
        <title>New insights into Acinetobacter baumannii pathogenesis revealed by high-density pyrosequencing and transposon mutagenesis.</title>
        <authorList>
            <person name="Smith M.G."/>
            <person name="Gianoulis T.A."/>
            <person name="Pukatzki S."/>
            <person name="Mekalanos J.J."/>
            <person name="Ornston L.N."/>
            <person name="Gerstein M."/>
            <person name="Snyder M."/>
        </authorList>
    </citation>
    <scope>NUCLEOTIDE SEQUENCE [LARGE SCALE GENOMIC DNA]</scope>
    <source>
        <strain>ATCC 17978 / DSM 105126 / CIP 53.77 / LMG 1025 / NCDC KC755 / 5377</strain>
    </source>
</reference>
<comment type="function">
    <text evidence="1">Required for insertion of 4Fe-4S clusters for at least IspG.</text>
</comment>
<comment type="cofactor">
    <cofactor evidence="1">
        <name>iron-sulfur cluster</name>
        <dbReference type="ChEBI" id="CHEBI:30408"/>
    </cofactor>
    <text evidence="1">Binds 1 iron-sulfur cluster per subunit.</text>
</comment>
<comment type="subunit">
    <text evidence="1">Homodimer.</text>
</comment>
<comment type="similarity">
    <text evidence="1">Belongs to the HesB/IscA family.</text>
</comment>
<gene>
    <name evidence="1" type="primary">erpA</name>
    <name type="ordered locus">A1S_0011</name>
</gene>
<sequence>MNAQALVLTDNAANKVRQLRDSEGNDDLMLRVYVTGGGCSGFSYGFNFAESVNEDDAEFVNGDVKMLVDSLSYQYLVGSVVDYVEGLEGSRFIVQNPNATTTCGCGSSFSI</sequence>
<organism>
    <name type="scientific">Acinetobacter baumannii (strain ATCC 17978 / DSM 105126 / CIP 53.77 / LMG 1025 / NCDC KC755 / 5377)</name>
    <dbReference type="NCBI Taxonomy" id="400667"/>
    <lineage>
        <taxon>Bacteria</taxon>
        <taxon>Pseudomonadati</taxon>
        <taxon>Pseudomonadota</taxon>
        <taxon>Gammaproteobacteria</taxon>
        <taxon>Moraxellales</taxon>
        <taxon>Moraxellaceae</taxon>
        <taxon>Acinetobacter</taxon>
        <taxon>Acinetobacter calcoaceticus/baumannii complex</taxon>
    </lineage>
</organism>
<evidence type="ECO:0000255" key="1">
    <source>
        <dbReference type="HAMAP-Rule" id="MF_01380"/>
    </source>
</evidence>
<name>ERPA_ACIBT</name>
<proteinExistence type="inferred from homology"/>
<keyword id="KW-0408">Iron</keyword>
<keyword id="KW-0411">Iron-sulfur</keyword>
<keyword id="KW-0479">Metal-binding</keyword>
<accession>A3M0R4</accession>
<dbReference type="EMBL" id="CP000521">
    <property type="protein sequence ID" value="ABO10508.2"/>
    <property type="molecule type" value="Genomic_DNA"/>
</dbReference>
<dbReference type="RefSeq" id="WP_000993572.1">
    <property type="nucleotide sequence ID" value="NZ_CP053098.1"/>
</dbReference>
<dbReference type="SMR" id="A3M0R4"/>
<dbReference type="GeneID" id="92891930"/>
<dbReference type="KEGG" id="acb:A1S_0011"/>
<dbReference type="HOGENOM" id="CLU_069054_5_3_6"/>
<dbReference type="GO" id="GO:0051537">
    <property type="term" value="F:2 iron, 2 sulfur cluster binding"/>
    <property type="evidence" value="ECO:0007669"/>
    <property type="project" value="UniProtKB-ARBA"/>
</dbReference>
<dbReference type="GO" id="GO:0051539">
    <property type="term" value="F:4 iron, 4 sulfur cluster binding"/>
    <property type="evidence" value="ECO:0007669"/>
    <property type="project" value="TreeGrafter"/>
</dbReference>
<dbReference type="GO" id="GO:0005506">
    <property type="term" value="F:iron ion binding"/>
    <property type="evidence" value="ECO:0007669"/>
    <property type="project" value="UniProtKB-UniRule"/>
</dbReference>
<dbReference type="GO" id="GO:0016226">
    <property type="term" value="P:iron-sulfur cluster assembly"/>
    <property type="evidence" value="ECO:0007669"/>
    <property type="project" value="UniProtKB-UniRule"/>
</dbReference>
<dbReference type="FunFam" id="2.60.300.12:FF:000002">
    <property type="entry name" value="Iron-sulfur cluster insertion protein ErpA"/>
    <property type="match status" value="1"/>
</dbReference>
<dbReference type="Gene3D" id="2.60.300.12">
    <property type="entry name" value="HesB-like domain"/>
    <property type="match status" value="1"/>
</dbReference>
<dbReference type="HAMAP" id="MF_01380">
    <property type="entry name" value="Fe_S_insert_ErpA"/>
    <property type="match status" value="1"/>
</dbReference>
<dbReference type="InterPro" id="IPR000361">
    <property type="entry name" value="FeS_biogenesis"/>
</dbReference>
<dbReference type="InterPro" id="IPR016092">
    <property type="entry name" value="FeS_cluster_insertion"/>
</dbReference>
<dbReference type="InterPro" id="IPR017870">
    <property type="entry name" value="FeS_cluster_insertion_CS"/>
</dbReference>
<dbReference type="InterPro" id="IPR023063">
    <property type="entry name" value="FeS_cluster_insertion_RrpA"/>
</dbReference>
<dbReference type="InterPro" id="IPR035903">
    <property type="entry name" value="HesB-like_dom_sf"/>
</dbReference>
<dbReference type="NCBIfam" id="TIGR00049">
    <property type="entry name" value="iron-sulfur cluster assembly accessory protein"/>
    <property type="match status" value="1"/>
</dbReference>
<dbReference type="NCBIfam" id="NF010147">
    <property type="entry name" value="PRK13623.1"/>
    <property type="match status" value="1"/>
</dbReference>
<dbReference type="PANTHER" id="PTHR43011">
    <property type="entry name" value="IRON-SULFUR CLUSTER ASSEMBLY 2 HOMOLOG, MITOCHONDRIAL"/>
    <property type="match status" value="1"/>
</dbReference>
<dbReference type="PANTHER" id="PTHR43011:SF1">
    <property type="entry name" value="IRON-SULFUR CLUSTER ASSEMBLY 2 HOMOLOG, MITOCHONDRIAL"/>
    <property type="match status" value="1"/>
</dbReference>
<dbReference type="Pfam" id="PF01521">
    <property type="entry name" value="Fe-S_biosyn"/>
    <property type="match status" value="1"/>
</dbReference>
<dbReference type="SUPFAM" id="SSF89360">
    <property type="entry name" value="HesB-like domain"/>
    <property type="match status" value="1"/>
</dbReference>
<dbReference type="PROSITE" id="PS01152">
    <property type="entry name" value="HESB"/>
    <property type="match status" value="1"/>
</dbReference>
<protein>
    <recommendedName>
        <fullName evidence="1">Iron-sulfur cluster insertion protein ErpA</fullName>
    </recommendedName>
</protein>